<evidence type="ECO:0000250" key="1"/>
<evidence type="ECO:0000269" key="2">
    <source>
    </source>
</evidence>
<evidence type="ECO:0000305" key="3"/>
<sequence>MEKLRVGIVFGGKSAEHEVSLQSAKNIVDAIDKSRFDVVLLGIDKQGQWHVSDASNYLLNADDPAHIALRPSATSLAQVPGKHEHQLIDAQNGQPLPTVDVIFPIVHGTLGEDGSLQGMLRVANLPFVGSDVLASAACMDKDVTKRLLRDAGLNIAPFITLTRANRHNISFAEVESKLGLPLFVKPANQGSSVGVSKVTSEEQYAIAVDLAFEFDHKVIVEQGIKGREIECAVLGNDNPQASTCGEIVLTSDFYAYDTKYIDEDGAKVVVPAAIAPEINDKIRAIAVQAYQTLGCAGMARVDVFLTPENEVVINEINTLPGFTNISMYPKLWQASGLGYTDLITRLIELALERHAADNALKTTM</sequence>
<protein>
    <recommendedName>
        <fullName>D-alanine--D-alanine ligase A</fullName>
        <ecNumber>6.3.2.4</ecNumber>
    </recommendedName>
    <alternativeName>
        <fullName>D-Ala-D-Ala ligase A</fullName>
    </alternativeName>
    <alternativeName>
        <fullName>D-alanylalanine synthetase A</fullName>
    </alternativeName>
</protein>
<organism>
    <name type="scientific">Escherichia coli (strain K12)</name>
    <dbReference type="NCBI Taxonomy" id="83333"/>
    <lineage>
        <taxon>Bacteria</taxon>
        <taxon>Pseudomonadati</taxon>
        <taxon>Pseudomonadota</taxon>
        <taxon>Gammaproteobacteria</taxon>
        <taxon>Enterobacterales</taxon>
        <taxon>Enterobacteriaceae</taxon>
        <taxon>Escherichia</taxon>
    </lineage>
</organism>
<reference key="1">
    <citation type="journal article" date="1991" name="Biochemistry">
        <title>Existence of two D-alanine:D-alanine ligases in Escherichia coli: cloning and sequencing of the ddlA gene and purification and characterization of the DdlA and DdlB enzymes.</title>
        <authorList>
            <person name="Zawadzke L.E."/>
            <person name="Bugg T.D."/>
            <person name="Walsh C.T."/>
        </authorList>
    </citation>
    <scope>NUCLEOTIDE SEQUENCE [GENOMIC DNA]</scope>
    <scope>CATALYTIC ACTIVITY</scope>
</reference>
<reference key="2">
    <citation type="submission" date="1997-01" db="EMBL/GenBank/DDBJ databases">
        <title>Sequence of minutes 4-25 of Escherichia coli.</title>
        <authorList>
            <person name="Chung E."/>
            <person name="Allen E."/>
            <person name="Araujo R."/>
            <person name="Aparicio A.M."/>
            <person name="Davis K."/>
            <person name="Duncan M."/>
            <person name="Federspiel N."/>
            <person name="Hyman R."/>
            <person name="Kalman S."/>
            <person name="Komp C."/>
            <person name="Kurdi O."/>
            <person name="Lew H."/>
            <person name="Lin D."/>
            <person name="Namath A."/>
            <person name="Oefner P."/>
            <person name="Roberts D."/>
            <person name="Schramm S."/>
            <person name="Davis R.W."/>
        </authorList>
    </citation>
    <scope>NUCLEOTIDE SEQUENCE [LARGE SCALE GENOMIC DNA]</scope>
    <source>
        <strain>K12 / MG1655 / ATCC 47076</strain>
    </source>
</reference>
<reference key="3">
    <citation type="journal article" date="1997" name="Science">
        <title>The complete genome sequence of Escherichia coli K-12.</title>
        <authorList>
            <person name="Blattner F.R."/>
            <person name="Plunkett G. III"/>
            <person name="Bloch C.A."/>
            <person name="Perna N.T."/>
            <person name="Burland V."/>
            <person name="Riley M."/>
            <person name="Collado-Vides J."/>
            <person name="Glasner J.D."/>
            <person name="Rode C.K."/>
            <person name="Mayhew G.F."/>
            <person name="Gregor J."/>
            <person name="Davis N.W."/>
            <person name="Kirkpatrick H.A."/>
            <person name="Goeden M.A."/>
            <person name="Rose D.J."/>
            <person name="Mau B."/>
            <person name="Shao Y."/>
        </authorList>
    </citation>
    <scope>NUCLEOTIDE SEQUENCE [LARGE SCALE GENOMIC DNA]</scope>
    <source>
        <strain>K12 / MG1655 / ATCC 47076</strain>
    </source>
</reference>
<reference key="4">
    <citation type="journal article" date="2006" name="Mol. Syst. Biol.">
        <title>Highly accurate genome sequences of Escherichia coli K-12 strains MG1655 and W3110.</title>
        <authorList>
            <person name="Hayashi K."/>
            <person name="Morooka N."/>
            <person name="Yamamoto Y."/>
            <person name="Fujita K."/>
            <person name="Isono K."/>
            <person name="Choi S."/>
            <person name="Ohtsubo E."/>
            <person name="Baba T."/>
            <person name="Wanner B.L."/>
            <person name="Mori H."/>
            <person name="Horiuchi T."/>
        </authorList>
    </citation>
    <scope>NUCLEOTIDE SEQUENCE [LARGE SCALE GENOMIC DNA]</scope>
    <source>
        <strain>K12 / W3110 / ATCC 27325 / DSM 5911</strain>
    </source>
</reference>
<name>DDLA_ECOLI</name>
<accession>P0A6J8</accession>
<accession>P23844</accession>
<accession>Q2MC44</accession>
<keyword id="KW-0067">ATP-binding</keyword>
<keyword id="KW-0133">Cell shape</keyword>
<keyword id="KW-0961">Cell wall biogenesis/degradation</keyword>
<keyword id="KW-0963">Cytoplasm</keyword>
<keyword id="KW-0436">Ligase</keyword>
<keyword id="KW-0460">Magnesium</keyword>
<keyword id="KW-0464">Manganese</keyword>
<keyword id="KW-0479">Metal-binding</keyword>
<keyword id="KW-0547">Nucleotide-binding</keyword>
<keyword id="KW-0573">Peptidoglycan synthesis</keyword>
<keyword id="KW-1185">Reference proteome</keyword>
<comment type="function">
    <text>Cell wall formation.</text>
</comment>
<comment type="catalytic activity">
    <reaction evidence="2">
        <text>2 D-alanine + ATP = D-alanyl-D-alanine + ADP + phosphate + H(+)</text>
        <dbReference type="Rhea" id="RHEA:11224"/>
        <dbReference type="ChEBI" id="CHEBI:15378"/>
        <dbReference type="ChEBI" id="CHEBI:30616"/>
        <dbReference type="ChEBI" id="CHEBI:43474"/>
        <dbReference type="ChEBI" id="CHEBI:57416"/>
        <dbReference type="ChEBI" id="CHEBI:57822"/>
        <dbReference type="ChEBI" id="CHEBI:456216"/>
        <dbReference type="EC" id="6.3.2.4"/>
    </reaction>
</comment>
<comment type="cofactor">
    <cofactor evidence="1">
        <name>Mg(2+)</name>
        <dbReference type="ChEBI" id="CHEBI:18420"/>
    </cofactor>
    <cofactor evidence="1">
        <name>Mn(2+)</name>
        <dbReference type="ChEBI" id="CHEBI:29035"/>
    </cofactor>
    <text evidence="1">Binds 2 magnesium or manganese ions per subunit.</text>
</comment>
<comment type="pathway">
    <text>Cell wall biogenesis; peptidoglycan biosynthesis.</text>
</comment>
<comment type="subcellular location">
    <subcellularLocation>
        <location>Cytoplasm</location>
    </subcellularLocation>
</comment>
<comment type="similarity">
    <text evidence="3">Belongs to the D-alanine--D-alanine ligase family.</text>
</comment>
<feature type="chain" id="PRO_0000177815" description="D-alanine--D-alanine ligase A">
    <location>
        <begin position="1"/>
        <end position="364"/>
    </location>
</feature>
<feature type="domain" description="ATP-grasp">
    <location>
        <begin position="145"/>
        <end position="348"/>
    </location>
</feature>
<feature type="binding site" evidence="1">
    <location>
        <begin position="175"/>
        <end position="230"/>
    </location>
    <ligand>
        <name>ATP</name>
        <dbReference type="ChEBI" id="CHEBI:30616"/>
    </ligand>
</feature>
<feature type="binding site" evidence="1">
    <location>
        <position position="302"/>
    </location>
    <ligand>
        <name>Mg(2+)</name>
        <dbReference type="ChEBI" id="CHEBI:18420"/>
        <label>1</label>
    </ligand>
</feature>
<feature type="binding site" evidence="1">
    <location>
        <position position="315"/>
    </location>
    <ligand>
        <name>Mg(2+)</name>
        <dbReference type="ChEBI" id="CHEBI:18420"/>
        <label>1</label>
    </ligand>
</feature>
<feature type="binding site" evidence="1">
    <location>
        <position position="315"/>
    </location>
    <ligand>
        <name>Mg(2+)</name>
        <dbReference type="ChEBI" id="CHEBI:18420"/>
        <label>2</label>
    </ligand>
</feature>
<feature type="binding site" evidence="1">
    <location>
        <position position="317"/>
    </location>
    <ligand>
        <name>Mg(2+)</name>
        <dbReference type="ChEBI" id="CHEBI:18420"/>
        <label>2</label>
    </ligand>
</feature>
<proteinExistence type="evidence at protein level"/>
<gene>
    <name type="primary">ddlA</name>
    <name type="ordered locus">b0381</name>
    <name type="ordered locus">JW0372</name>
</gene>
<dbReference type="EC" id="6.3.2.4"/>
<dbReference type="EMBL" id="M58467">
    <property type="protein sequence ID" value="AAA23671.1"/>
    <property type="molecule type" value="Genomic_DNA"/>
</dbReference>
<dbReference type="EMBL" id="U73857">
    <property type="protein sequence ID" value="AAB18104.1"/>
    <property type="molecule type" value="Genomic_DNA"/>
</dbReference>
<dbReference type="EMBL" id="U00096">
    <property type="protein sequence ID" value="AAC73484.1"/>
    <property type="molecule type" value="Genomic_DNA"/>
</dbReference>
<dbReference type="EMBL" id="AP009048">
    <property type="protein sequence ID" value="BAE76162.1"/>
    <property type="molecule type" value="Genomic_DNA"/>
</dbReference>
<dbReference type="PIR" id="A39182">
    <property type="entry name" value="CEECDA"/>
</dbReference>
<dbReference type="RefSeq" id="NP_414915.1">
    <property type="nucleotide sequence ID" value="NC_000913.3"/>
</dbReference>
<dbReference type="RefSeq" id="WP_000413677.1">
    <property type="nucleotide sequence ID" value="NZ_STEB01000007.1"/>
</dbReference>
<dbReference type="SMR" id="P0A6J8"/>
<dbReference type="BioGRID" id="4261531">
    <property type="interactions" value="468"/>
</dbReference>
<dbReference type="BioGRID" id="849690">
    <property type="interactions" value="1"/>
</dbReference>
<dbReference type="DIP" id="DIP-47939N"/>
<dbReference type="FunCoup" id="P0A6J8">
    <property type="interactions" value="206"/>
</dbReference>
<dbReference type="IntAct" id="P0A6J8">
    <property type="interactions" value="14"/>
</dbReference>
<dbReference type="STRING" id="511145.b0381"/>
<dbReference type="DrugBank" id="DB00260">
    <property type="generic name" value="Cycloserine"/>
</dbReference>
<dbReference type="jPOST" id="P0A6J8"/>
<dbReference type="PaxDb" id="511145-b0381"/>
<dbReference type="EnsemblBacteria" id="AAC73484">
    <property type="protein sequence ID" value="AAC73484"/>
    <property type="gene ID" value="b0381"/>
</dbReference>
<dbReference type="GeneID" id="93777081"/>
<dbReference type="GeneID" id="945313"/>
<dbReference type="KEGG" id="ecj:JW0372"/>
<dbReference type="KEGG" id="eco:b0381"/>
<dbReference type="KEGG" id="ecoc:C3026_01840"/>
<dbReference type="PATRIC" id="fig|1411691.4.peg.1897"/>
<dbReference type="EchoBASE" id="EB0209"/>
<dbReference type="eggNOG" id="COG1181">
    <property type="taxonomic scope" value="Bacteria"/>
</dbReference>
<dbReference type="HOGENOM" id="CLU_039268_0_1_6"/>
<dbReference type="InParanoid" id="P0A6J8"/>
<dbReference type="OMA" id="NMHSKYF"/>
<dbReference type="OrthoDB" id="9813261at2"/>
<dbReference type="PhylomeDB" id="P0A6J8"/>
<dbReference type="BioCyc" id="EcoCyc:DALADALALIGA-MONOMER"/>
<dbReference type="BioCyc" id="MetaCyc:DALADALALIGA-MONOMER"/>
<dbReference type="UniPathway" id="UPA00219"/>
<dbReference type="PRO" id="PR:P0A6J8"/>
<dbReference type="Proteomes" id="UP000000625">
    <property type="component" value="Chromosome"/>
</dbReference>
<dbReference type="GO" id="GO:0005829">
    <property type="term" value="C:cytosol"/>
    <property type="evidence" value="ECO:0000314"/>
    <property type="project" value="EcoCyc"/>
</dbReference>
<dbReference type="GO" id="GO:0005524">
    <property type="term" value="F:ATP binding"/>
    <property type="evidence" value="ECO:0007669"/>
    <property type="project" value="UniProtKB-KW"/>
</dbReference>
<dbReference type="GO" id="GO:0008716">
    <property type="term" value="F:D-alanine-D-alanine ligase activity"/>
    <property type="evidence" value="ECO:0000314"/>
    <property type="project" value="EcoCyc"/>
</dbReference>
<dbReference type="GO" id="GO:0046872">
    <property type="term" value="F:metal ion binding"/>
    <property type="evidence" value="ECO:0007669"/>
    <property type="project" value="UniProtKB-KW"/>
</dbReference>
<dbReference type="GO" id="GO:0071555">
    <property type="term" value="P:cell wall organization"/>
    <property type="evidence" value="ECO:0007669"/>
    <property type="project" value="UniProtKB-KW"/>
</dbReference>
<dbReference type="GO" id="GO:0009252">
    <property type="term" value="P:peptidoglycan biosynthetic process"/>
    <property type="evidence" value="ECO:0000318"/>
    <property type="project" value="GO_Central"/>
</dbReference>
<dbReference type="GO" id="GO:0008360">
    <property type="term" value="P:regulation of cell shape"/>
    <property type="evidence" value="ECO:0007669"/>
    <property type="project" value="UniProtKB-KW"/>
</dbReference>
<dbReference type="GO" id="GO:0010165">
    <property type="term" value="P:response to X-ray"/>
    <property type="evidence" value="ECO:0000315"/>
    <property type="project" value="EcoCyc"/>
</dbReference>
<dbReference type="FunFam" id="3.30.1490.20:FF:000007">
    <property type="entry name" value="D-alanine--D-alanine ligase"/>
    <property type="match status" value="1"/>
</dbReference>
<dbReference type="FunFam" id="3.30.470.20:FF:000008">
    <property type="entry name" value="D-alanine--D-alanine ligase"/>
    <property type="match status" value="1"/>
</dbReference>
<dbReference type="FunFam" id="3.40.50.20:FF:000015">
    <property type="entry name" value="D-alanine--D-alanine ligase"/>
    <property type="match status" value="1"/>
</dbReference>
<dbReference type="Gene3D" id="3.40.50.20">
    <property type="match status" value="1"/>
</dbReference>
<dbReference type="Gene3D" id="3.30.1490.20">
    <property type="entry name" value="ATP-grasp fold, A domain"/>
    <property type="match status" value="1"/>
</dbReference>
<dbReference type="Gene3D" id="3.30.470.20">
    <property type="entry name" value="ATP-grasp fold, B domain"/>
    <property type="match status" value="1"/>
</dbReference>
<dbReference type="HAMAP" id="MF_00047">
    <property type="entry name" value="Dala_Dala_lig"/>
    <property type="match status" value="1"/>
</dbReference>
<dbReference type="InterPro" id="IPR011761">
    <property type="entry name" value="ATP-grasp"/>
</dbReference>
<dbReference type="InterPro" id="IPR013815">
    <property type="entry name" value="ATP_grasp_subdomain_1"/>
</dbReference>
<dbReference type="InterPro" id="IPR000291">
    <property type="entry name" value="D-Ala_lig_Van_CS"/>
</dbReference>
<dbReference type="InterPro" id="IPR005905">
    <property type="entry name" value="D_ala_D_ala"/>
</dbReference>
<dbReference type="InterPro" id="IPR011095">
    <property type="entry name" value="Dala_Dala_lig_C"/>
</dbReference>
<dbReference type="InterPro" id="IPR011127">
    <property type="entry name" value="Dala_Dala_lig_N"/>
</dbReference>
<dbReference type="InterPro" id="IPR016185">
    <property type="entry name" value="PreATP-grasp_dom_sf"/>
</dbReference>
<dbReference type="NCBIfam" id="TIGR01205">
    <property type="entry name" value="D_ala_D_alaTIGR"/>
    <property type="match status" value="1"/>
</dbReference>
<dbReference type="NCBIfam" id="NF002378">
    <property type="entry name" value="PRK01372.1"/>
    <property type="match status" value="1"/>
</dbReference>
<dbReference type="NCBIfam" id="NF002525">
    <property type="entry name" value="PRK01966.1-1"/>
    <property type="match status" value="1"/>
</dbReference>
<dbReference type="NCBIfam" id="NF002528">
    <property type="entry name" value="PRK01966.1-4"/>
    <property type="match status" value="1"/>
</dbReference>
<dbReference type="PANTHER" id="PTHR23132">
    <property type="entry name" value="D-ALANINE--D-ALANINE LIGASE"/>
    <property type="match status" value="1"/>
</dbReference>
<dbReference type="PANTHER" id="PTHR23132:SF25">
    <property type="entry name" value="D-ALANINE--D-ALANINE LIGASE A"/>
    <property type="match status" value="1"/>
</dbReference>
<dbReference type="Pfam" id="PF07478">
    <property type="entry name" value="Dala_Dala_lig_C"/>
    <property type="match status" value="1"/>
</dbReference>
<dbReference type="Pfam" id="PF01820">
    <property type="entry name" value="Dala_Dala_lig_N"/>
    <property type="match status" value="1"/>
</dbReference>
<dbReference type="PIRSF" id="PIRSF039102">
    <property type="entry name" value="Ddl/VanB"/>
    <property type="match status" value="1"/>
</dbReference>
<dbReference type="SUPFAM" id="SSF56059">
    <property type="entry name" value="Glutathione synthetase ATP-binding domain-like"/>
    <property type="match status" value="1"/>
</dbReference>
<dbReference type="SUPFAM" id="SSF52440">
    <property type="entry name" value="PreATP-grasp domain"/>
    <property type="match status" value="1"/>
</dbReference>
<dbReference type="PROSITE" id="PS50975">
    <property type="entry name" value="ATP_GRASP"/>
    <property type="match status" value="1"/>
</dbReference>
<dbReference type="PROSITE" id="PS00843">
    <property type="entry name" value="DALA_DALA_LIGASE_1"/>
    <property type="match status" value="1"/>
</dbReference>
<dbReference type="PROSITE" id="PS00844">
    <property type="entry name" value="DALA_DALA_LIGASE_2"/>
    <property type="match status" value="1"/>
</dbReference>